<organism>
    <name type="scientific">Staphylococcus aureus (strain MSSA476)</name>
    <dbReference type="NCBI Taxonomy" id="282459"/>
    <lineage>
        <taxon>Bacteria</taxon>
        <taxon>Bacillati</taxon>
        <taxon>Bacillota</taxon>
        <taxon>Bacilli</taxon>
        <taxon>Bacillales</taxon>
        <taxon>Staphylococcaceae</taxon>
        <taxon>Staphylococcus</taxon>
    </lineage>
</organism>
<keyword id="KW-0056">Arginine metabolism</keyword>
<keyword id="KW-0963">Cytoplasm</keyword>
<keyword id="KW-0808">Transferase</keyword>
<dbReference type="EC" id="2.1.3.3" evidence="2"/>
<dbReference type="EMBL" id="BX571857">
    <property type="protein sequence ID" value="CAG44337.1"/>
    <property type="molecule type" value="Genomic_DNA"/>
</dbReference>
<dbReference type="SMR" id="Q6G640"/>
<dbReference type="KEGG" id="sas:SAS2520"/>
<dbReference type="HOGENOM" id="CLU_043846_3_1_9"/>
<dbReference type="UniPathway" id="UPA00254">
    <property type="reaction ID" value="UER00365"/>
</dbReference>
<dbReference type="GO" id="GO:0005737">
    <property type="term" value="C:cytoplasm"/>
    <property type="evidence" value="ECO:0007669"/>
    <property type="project" value="UniProtKB-SubCell"/>
</dbReference>
<dbReference type="GO" id="GO:0016597">
    <property type="term" value="F:amino acid binding"/>
    <property type="evidence" value="ECO:0007669"/>
    <property type="project" value="InterPro"/>
</dbReference>
<dbReference type="GO" id="GO:0004585">
    <property type="term" value="F:ornithine carbamoyltransferase activity"/>
    <property type="evidence" value="ECO:0007669"/>
    <property type="project" value="UniProtKB-UniRule"/>
</dbReference>
<dbReference type="GO" id="GO:0042450">
    <property type="term" value="P:arginine biosynthetic process via ornithine"/>
    <property type="evidence" value="ECO:0007669"/>
    <property type="project" value="TreeGrafter"/>
</dbReference>
<dbReference type="GO" id="GO:0019547">
    <property type="term" value="P:arginine catabolic process to ornithine"/>
    <property type="evidence" value="ECO:0007669"/>
    <property type="project" value="UniProtKB-UniPathway"/>
</dbReference>
<dbReference type="GO" id="GO:0019240">
    <property type="term" value="P:citrulline biosynthetic process"/>
    <property type="evidence" value="ECO:0007669"/>
    <property type="project" value="TreeGrafter"/>
</dbReference>
<dbReference type="GO" id="GO:0006526">
    <property type="term" value="P:L-arginine biosynthetic process"/>
    <property type="evidence" value="ECO:0007669"/>
    <property type="project" value="UniProtKB-UniRule"/>
</dbReference>
<dbReference type="FunFam" id="3.40.50.1370:FF:000008">
    <property type="entry name" value="Ornithine carbamoyltransferase"/>
    <property type="match status" value="1"/>
</dbReference>
<dbReference type="Gene3D" id="3.40.50.1370">
    <property type="entry name" value="Aspartate/ornithine carbamoyltransferase"/>
    <property type="match status" value="2"/>
</dbReference>
<dbReference type="HAMAP" id="MF_01109">
    <property type="entry name" value="OTCase"/>
    <property type="match status" value="1"/>
</dbReference>
<dbReference type="InterPro" id="IPR006132">
    <property type="entry name" value="Asp/Orn_carbamoyltranf_P-bd"/>
</dbReference>
<dbReference type="InterPro" id="IPR006130">
    <property type="entry name" value="Asp/Orn_carbamoylTrfase"/>
</dbReference>
<dbReference type="InterPro" id="IPR036901">
    <property type="entry name" value="Asp/Orn_carbamoylTrfase_sf"/>
</dbReference>
<dbReference type="InterPro" id="IPR006131">
    <property type="entry name" value="Asp_carbamoyltransf_Asp/Orn-bd"/>
</dbReference>
<dbReference type="InterPro" id="IPR002292">
    <property type="entry name" value="Orn/put_carbamltrans"/>
</dbReference>
<dbReference type="InterPro" id="IPR024904">
    <property type="entry name" value="OTCase_ArgI"/>
</dbReference>
<dbReference type="NCBIfam" id="TIGR00658">
    <property type="entry name" value="orni_carb_tr"/>
    <property type="match status" value="1"/>
</dbReference>
<dbReference type="NCBIfam" id="NF001986">
    <property type="entry name" value="PRK00779.1"/>
    <property type="match status" value="1"/>
</dbReference>
<dbReference type="PANTHER" id="PTHR45753:SF1">
    <property type="entry name" value="ORNITHINE CARBAMOYLTRANSFERASE, CATABOLIC"/>
    <property type="match status" value="1"/>
</dbReference>
<dbReference type="PANTHER" id="PTHR45753">
    <property type="entry name" value="ORNITHINE CARBAMOYLTRANSFERASE, MITOCHONDRIAL"/>
    <property type="match status" value="1"/>
</dbReference>
<dbReference type="Pfam" id="PF00185">
    <property type="entry name" value="OTCace"/>
    <property type="match status" value="1"/>
</dbReference>
<dbReference type="Pfam" id="PF02729">
    <property type="entry name" value="OTCace_N"/>
    <property type="match status" value="1"/>
</dbReference>
<dbReference type="PRINTS" id="PR00100">
    <property type="entry name" value="AOTCASE"/>
</dbReference>
<dbReference type="PRINTS" id="PR00102">
    <property type="entry name" value="OTCASE"/>
</dbReference>
<dbReference type="SUPFAM" id="SSF53671">
    <property type="entry name" value="Aspartate/ornithine carbamoyltransferase"/>
    <property type="match status" value="1"/>
</dbReference>
<dbReference type="PROSITE" id="PS00097">
    <property type="entry name" value="CARBAMOYLTRANSFERASE"/>
    <property type="match status" value="1"/>
</dbReference>
<accession>Q6G640</accession>
<evidence type="ECO:0000250" key="1"/>
<evidence type="ECO:0000255" key="2">
    <source>
        <dbReference type="HAMAP-Rule" id="MF_01109"/>
    </source>
</evidence>
<sequence>MTEIQKPYDLKGRSLLKESDFTKAEFEGLIDFAITLKEYKKNGIKHHYLSGKNIALLFEKNSTRTRAAFTVASIDLGAHPEFLGKNDIQLGKKESVEDTAKVLGRMFDGIEFRGFSQQAVEDLAKFSGVPVWNGLTDDWHPTQMLADFMTIKENFGYLEGINLTYVGDGRNNIAHSLMVAGAMLGVNVRICTPKSLNPKEAYVDIAKEKASQYGGSVMITDNIAEAVENTDAIYTDVWVSMGEESEFEQRINLLKDYQVNQQMFDLTGKDSTIFLHCLPAFHDTNTLYGQEIYEKYGLAEMEVTDQIFRSEHSKVFDQAENRMHTIKAVMAATLGS</sequence>
<reference key="1">
    <citation type="journal article" date="2004" name="Proc. Natl. Acad. Sci. U.S.A.">
        <title>Complete genomes of two clinical Staphylococcus aureus strains: evidence for the rapid evolution of virulence and drug resistance.</title>
        <authorList>
            <person name="Holden M.T.G."/>
            <person name="Feil E.J."/>
            <person name="Lindsay J.A."/>
            <person name="Peacock S.J."/>
            <person name="Day N.P.J."/>
            <person name="Enright M.C."/>
            <person name="Foster T.J."/>
            <person name="Moore C.E."/>
            <person name="Hurst L."/>
            <person name="Atkin R."/>
            <person name="Barron A."/>
            <person name="Bason N."/>
            <person name="Bentley S.D."/>
            <person name="Chillingworth C."/>
            <person name="Chillingworth T."/>
            <person name="Churcher C."/>
            <person name="Clark L."/>
            <person name="Corton C."/>
            <person name="Cronin A."/>
            <person name="Doggett J."/>
            <person name="Dowd L."/>
            <person name="Feltwell T."/>
            <person name="Hance Z."/>
            <person name="Harris B."/>
            <person name="Hauser H."/>
            <person name="Holroyd S."/>
            <person name="Jagels K."/>
            <person name="James K.D."/>
            <person name="Lennard N."/>
            <person name="Line A."/>
            <person name="Mayes R."/>
            <person name="Moule S."/>
            <person name="Mungall K."/>
            <person name="Ormond D."/>
            <person name="Quail M.A."/>
            <person name="Rabbinowitsch E."/>
            <person name="Rutherford K.M."/>
            <person name="Sanders M."/>
            <person name="Sharp S."/>
            <person name="Simmonds M."/>
            <person name="Stevens K."/>
            <person name="Whitehead S."/>
            <person name="Barrell B.G."/>
            <person name="Spratt B.G."/>
            <person name="Parkhill J."/>
        </authorList>
    </citation>
    <scope>NUCLEOTIDE SEQUENCE [LARGE SCALE GENOMIC DNA]</scope>
    <source>
        <strain>MSSA476</strain>
    </source>
</reference>
<protein>
    <recommendedName>
        <fullName evidence="2">Ornithine carbamoyltransferase, catabolic</fullName>
        <shortName evidence="2">OTCase</shortName>
        <ecNumber evidence="2">2.1.3.3</ecNumber>
    </recommendedName>
</protein>
<comment type="function">
    <text evidence="1">Reversibly catalyzes the transfer of the carbamoyl group from carbamoyl phosphate (CP) to the N(epsilon) atom of ornithine (ORN) to produce L-citrulline.</text>
</comment>
<comment type="catalytic activity">
    <reaction evidence="2">
        <text>carbamoyl phosphate + L-ornithine = L-citrulline + phosphate + H(+)</text>
        <dbReference type="Rhea" id="RHEA:19513"/>
        <dbReference type="ChEBI" id="CHEBI:15378"/>
        <dbReference type="ChEBI" id="CHEBI:43474"/>
        <dbReference type="ChEBI" id="CHEBI:46911"/>
        <dbReference type="ChEBI" id="CHEBI:57743"/>
        <dbReference type="ChEBI" id="CHEBI:58228"/>
        <dbReference type="EC" id="2.1.3.3"/>
    </reaction>
</comment>
<comment type="pathway">
    <text evidence="2">Amino-acid degradation; L-arginine degradation via ADI pathway; carbamoyl phosphate from L-arginine: step 2/2.</text>
</comment>
<comment type="subcellular location">
    <subcellularLocation>
        <location evidence="2">Cytoplasm</location>
    </subcellularLocation>
</comment>
<comment type="similarity">
    <text evidence="2">Belongs to the aspartate/ornithine carbamoyltransferase superfamily. OTCase family.</text>
</comment>
<feature type="chain" id="PRO_0000113018" description="Ornithine carbamoyltransferase, catabolic">
    <location>
        <begin position="1"/>
        <end position="336"/>
    </location>
</feature>
<feature type="binding site" evidence="2">
    <location>
        <begin position="62"/>
        <end position="65"/>
    </location>
    <ligand>
        <name>carbamoyl phosphate</name>
        <dbReference type="ChEBI" id="CHEBI:58228"/>
    </ligand>
</feature>
<feature type="binding site" evidence="2">
    <location>
        <position position="89"/>
    </location>
    <ligand>
        <name>carbamoyl phosphate</name>
        <dbReference type="ChEBI" id="CHEBI:58228"/>
    </ligand>
</feature>
<feature type="binding site" evidence="2">
    <location>
        <position position="113"/>
    </location>
    <ligand>
        <name>carbamoyl phosphate</name>
        <dbReference type="ChEBI" id="CHEBI:58228"/>
    </ligand>
</feature>
<feature type="binding site" evidence="2">
    <location>
        <begin position="140"/>
        <end position="143"/>
    </location>
    <ligand>
        <name>carbamoyl phosphate</name>
        <dbReference type="ChEBI" id="CHEBI:58228"/>
    </ligand>
</feature>
<feature type="binding site" evidence="2">
    <location>
        <position position="172"/>
    </location>
    <ligand>
        <name>L-ornithine</name>
        <dbReference type="ChEBI" id="CHEBI:46911"/>
    </ligand>
</feature>
<feature type="binding site" evidence="2">
    <location>
        <position position="236"/>
    </location>
    <ligand>
        <name>L-ornithine</name>
        <dbReference type="ChEBI" id="CHEBI:46911"/>
    </ligand>
</feature>
<feature type="binding site" evidence="2">
    <location>
        <begin position="240"/>
        <end position="241"/>
    </location>
    <ligand>
        <name>L-ornithine</name>
        <dbReference type="ChEBI" id="CHEBI:46911"/>
    </ligand>
</feature>
<feature type="binding site" evidence="2">
    <location>
        <begin position="277"/>
        <end position="278"/>
    </location>
    <ligand>
        <name>carbamoyl phosphate</name>
        <dbReference type="ChEBI" id="CHEBI:58228"/>
    </ligand>
</feature>
<feature type="binding site" evidence="2">
    <location>
        <position position="322"/>
    </location>
    <ligand>
        <name>carbamoyl phosphate</name>
        <dbReference type="ChEBI" id="CHEBI:58228"/>
    </ligand>
</feature>
<proteinExistence type="inferred from homology"/>
<gene>
    <name evidence="2" type="primary">arcB</name>
    <name type="ordered locus">SAS2520</name>
</gene>
<name>OTCC_STAAS</name>